<sequence>MTYKIMAINAGSSSLKFQLLNMPQGALLCQGLIERIGLPEARFMLKTSAQKWQETLPIADHHEAVTLLLEALTGRGILSSLQEIDGVGHRVAHGGERFKDAALVCDDTLREIERLAELAPLHNPVNALGIRLFRQRLPAVPAVAVFDTAFHQTLAPEAWLYPLPWRYYAELGIRRYGFHGTSHHYVSSALAEKLGVPLSALRVVSCHLGNGCSVCAIKGGQSVNTSMGFTPQSGVMMGTRSGDIDPSILPWLVEKEGKSALQLSQLLNNESGLLGVSGVSSDYRDVEQAADAGNERAALALSLFAERIRATIGSYIMQMGGLDALIFTGGIGEHSARARATICRNLHFLGLALDDEKNQRSATFIQADNALVKVAVINTNEELMIARDVMRLALPQARELTVSA</sequence>
<evidence type="ECO:0000250" key="1">
    <source>
        <dbReference type="UniProtKB" id="P74879"/>
    </source>
</evidence>
<evidence type="ECO:0000255" key="2">
    <source>
        <dbReference type="HAMAP-Rule" id="MF_01882"/>
    </source>
</evidence>
<evidence type="ECO:0000305" key="3"/>
<gene>
    <name evidence="2" type="primary">pduW</name>
    <name type="ordered locus">KPK_0893</name>
</gene>
<organism>
    <name type="scientific">Klebsiella pneumoniae (strain 342)</name>
    <dbReference type="NCBI Taxonomy" id="507522"/>
    <lineage>
        <taxon>Bacteria</taxon>
        <taxon>Pseudomonadati</taxon>
        <taxon>Pseudomonadota</taxon>
        <taxon>Gammaproteobacteria</taxon>
        <taxon>Enterobacterales</taxon>
        <taxon>Enterobacteriaceae</taxon>
        <taxon>Klebsiella/Raoultella group</taxon>
        <taxon>Klebsiella</taxon>
        <taxon>Klebsiella pneumoniae complex</taxon>
    </lineage>
</organism>
<reference key="1">
    <citation type="journal article" date="2008" name="PLoS Genet.">
        <title>Complete genome sequence of the N2-fixing broad host range endophyte Klebsiella pneumoniae 342 and virulence predictions verified in mice.</title>
        <authorList>
            <person name="Fouts D.E."/>
            <person name="Tyler H.L."/>
            <person name="DeBoy R.T."/>
            <person name="Daugherty S."/>
            <person name="Ren Q."/>
            <person name="Badger J.H."/>
            <person name="Durkin A.S."/>
            <person name="Huot H."/>
            <person name="Shrivastava S."/>
            <person name="Kothari S."/>
            <person name="Dodson R.J."/>
            <person name="Mohamoud Y."/>
            <person name="Khouri H."/>
            <person name="Roesch L.F.W."/>
            <person name="Krogfelt K.A."/>
            <person name="Struve C."/>
            <person name="Triplett E.W."/>
            <person name="Methe B.A."/>
        </authorList>
    </citation>
    <scope>NUCLEOTIDE SEQUENCE [LARGE SCALE GENOMIC DNA]</scope>
    <source>
        <strain>342</strain>
    </source>
</reference>
<dbReference type="EC" id="2.7.2.15" evidence="2"/>
<dbReference type="EMBL" id="CP000964">
    <property type="protein sequence ID" value="ACI07162.1"/>
    <property type="molecule type" value="Genomic_DNA"/>
</dbReference>
<dbReference type="SMR" id="B5XUR6"/>
<dbReference type="KEGG" id="kpe:KPK_0893"/>
<dbReference type="HOGENOM" id="CLU_020352_0_1_6"/>
<dbReference type="UniPathway" id="UPA00621"/>
<dbReference type="Proteomes" id="UP000001734">
    <property type="component" value="Chromosome"/>
</dbReference>
<dbReference type="GO" id="GO:0005737">
    <property type="term" value="C:cytoplasm"/>
    <property type="evidence" value="ECO:0007669"/>
    <property type="project" value="UniProtKB-SubCell"/>
</dbReference>
<dbReference type="GO" id="GO:0008776">
    <property type="term" value="F:acetate kinase activity"/>
    <property type="evidence" value="ECO:0007669"/>
    <property type="project" value="TreeGrafter"/>
</dbReference>
<dbReference type="GO" id="GO:0005524">
    <property type="term" value="F:ATP binding"/>
    <property type="evidence" value="ECO:0007669"/>
    <property type="project" value="UniProtKB-KW"/>
</dbReference>
<dbReference type="GO" id="GO:0008980">
    <property type="term" value="F:propionate kinase activity"/>
    <property type="evidence" value="ECO:0007669"/>
    <property type="project" value="UniProtKB-UniRule"/>
</dbReference>
<dbReference type="GO" id="GO:0006083">
    <property type="term" value="P:acetate metabolic process"/>
    <property type="evidence" value="ECO:0007669"/>
    <property type="project" value="TreeGrafter"/>
</dbReference>
<dbReference type="GO" id="GO:0051144">
    <property type="term" value="P:propanediol catabolic process"/>
    <property type="evidence" value="ECO:0007669"/>
    <property type="project" value="UniProtKB-UniPathway"/>
</dbReference>
<dbReference type="GO" id="GO:0019543">
    <property type="term" value="P:propionate catabolic process"/>
    <property type="evidence" value="ECO:0007669"/>
    <property type="project" value="InterPro"/>
</dbReference>
<dbReference type="CDD" id="cd24010">
    <property type="entry name" value="ASKHA_NBD_AcK_PK"/>
    <property type="match status" value="1"/>
</dbReference>
<dbReference type="Gene3D" id="3.30.420.40">
    <property type="match status" value="2"/>
</dbReference>
<dbReference type="HAMAP" id="MF_00020">
    <property type="entry name" value="Acetate_kinase"/>
    <property type="match status" value="1"/>
</dbReference>
<dbReference type="HAMAP" id="MF_01882">
    <property type="entry name" value="Propion_kin_subfam2"/>
    <property type="match status" value="1"/>
</dbReference>
<dbReference type="InterPro" id="IPR004372">
    <property type="entry name" value="Ac/propionate_kinase"/>
</dbReference>
<dbReference type="InterPro" id="IPR000890">
    <property type="entry name" value="Aliphatic_acid_kin_short-chain"/>
</dbReference>
<dbReference type="InterPro" id="IPR023865">
    <property type="entry name" value="Aliphatic_acid_kinase_CS"/>
</dbReference>
<dbReference type="InterPro" id="IPR043129">
    <property type="entry name" value="ATPase_NBD"/>
</dbReference>
<dbReference type="InterPro" id="IPR024896">
    <property type="entry name" value="Propionate_kinase_PduW"/>
</dbReference>
<dbReference type="NCBIfam" id="TIGR00016">
    <property type="entry name" value="ackA"/>
    <property type="match status" value="1"/>
</dbReference>
<dbReference type="NCBIfam" id="NF009063">
    <property type="entry name" value="PRK12397.1"/>
    <property type="match status" value="1"/>
</dbReference>
<dbReference type="PANTHER" id="PTHR21060">
    <property type="entry name" value="ACETATE KINASE"/>
    <property type="match status" value="1"/>
</dbReference>
<dbReference type="PANTHER" id="PTHR21060:SF15">
    <property type="entry name" value="ACETATE KINASE-RELATED"/>
    <property type="match status" value="1"/>
</dbReference>
<dbReference type="Pfam" id="PF00871">
    <property type="entry name" value="Acetate_kinase"/>
    <property type="match status" value="1"/>
</dbReference>
<dbReference type="PIRSF" id="PIRSF000722">
    <property type="entry name" value="Acetate_prop_kin"/>
    <property type="match status" value="1"/>
</dbReference>
<dbReference type="PRINTS" id="PR00471">
    <property type="entry name" value="ACETATEKNASE"/>
</dbReference>
<dbReference type="SUPFAM" id="SSF53067">
    <property type="entry name" value="Actin-like ATPase domain"/>
    <property type="match status" value="2"/>
</dbReference>
<dbReference type="PROSITE" id="PS01075">
    <property type="entry name" value="ACETATE_KINASE_1"/>
    <property type="match status" value="1"/>
</dbReference>
<dbReference type="PROSITE" id="PS01076">
    <property type="entry name" value="ACETATE_KINASE_2"/>
    <property type="match status" value="1"/>
</dbReference>
<protein>
    <recommendedName>
        <fullName evidence="2">Propionate kinase</fullName>
        <ecNumber evidence="2">2.7.2.15</ecNumber>
    </recommendedName>
</protein>
<feature type="chain" id="PRO_0000398199" description="Propionate kinase">
    <location>
        <begin position="1"/>
        <end position="404"/>
    </location>
</feature>
<keyword id="KW-0067">ATP-binding</keyword>
<keyword id="KW-0963">Cytoplasm</keyword>
<keyword id="KW-0418">Kinase</keyword>
<keyword id="KW-0547">Nucleotide-binding</keyword>
<keyword id="KW-0808">Transferase</keyword>
<comment type="function">
    <text evidence="1">Works with phosphate acetyltransferase (pta) to capture exogenous propionate and regenerate propionyl-CoA during degradation of 1,2-propanediol (1,2-PD).</text>
</comment>
<comment type="catalytic activity">
    <reaction evidence="2">
        <text>propanoate + ATP = propanoyl phosphate + ADP</text>
        <dbReference type="Rhea" id="RHEA:23148"/>
        <dbReference type="ChEBI" id="CHEBI:17272"/>
        <dbReference type="ChEBI" id="CHEBI:30616"/>
        <dbReference type="ChEBI" id="CHEBI:58933"/>
        <dbReference type="ChEBI" id="CHEBI:456216"/>
        <dbReference type="EC" id="2.7.2.15"/>
    </reaction>
</comment>
<comment type="pathway">
    <text evidence="1 3">Polyol metabolism; 1,2-propanediol degradation.</text>
</comment>
<comment type="subcellular location">
    <subcellularLocation>
        <location evidence="2">Cytoplasm</location>
    </subcellularLocation>
</comment>
<comment type="similarity">
    <text evidence="2">Belongs to the acetokinase family. PduW subfamily.</text>
</comment>
<name>PDUW_KLEP3</name>
<proteinExistence type="inferred from homology"/>
<accession>B5XUR6</accession>